<dbReference type="EMBL" id="AE008918">
    <property type="protein sequence ID" value="AAL53864.1"/>
    <property type="status" value="ALT_FRAME"/>
    <property type="molecule type" value="Genomic_DNA"/>
</dbReference>
<dbReference type="PIR" id="AE3587">
    <property type="entry name" value="AE3587"/>
</dbReference>
<dbReference type="RefSeq" id="WP_004684930.1">
    <property type="nucleotide sequence ID" value="NZ_AHWC01000022.1"/>
</dbReference>
<dbReference type="SMR" id="Q8YCB0"/>
<dbReference type="GeneID" id="97535229"/>
<dbReference type="KEGG" id="bme:BMEII0622"/>
<dbReference type="eggNOG" id="COG0395">
    <property type="taxonomic scope" value="Bacteria"/>
</dbReference>
<dbReference type="Proteomes" id="UP000000419">
    <property type="component" value="Chromosome II"/>
</dbReference>
<dbReference type="GO" id="GO:0005886">
    <property type="term" value="C:plasma membrane"/>
    <property type="evidence" value="ECO:0007669"/>
    <property type="project" value="UniProtKB-SubCell"/>
</dbReference>
<dbReference type="GO" id="GO:0055085">
    <property type="term" value="P:transmembrane transport"/>
    <property type="evidence" value="ECO:0007669"/>
    <property type="project" value="InterPro"/>
</dbReference>
<dbReference type="CDD" id="cd06261">
    <property type="entry name" value="TM_PBP2"/>
    <property type="match status" value="1"/>
</dbReference>
<dbReference type="Gene3D" id="1.10.3720.10">
    <property type="entry name" value="MetI-like"/>
    <property type="match status" value="1"/>
</dbReference>
<dbReference type="InterPro" id="IPR000515">
    <property type="entry name" value="MetI-like"/>
</dbReference>
<dbReference type="InterPro" id="IPR035906">
    <property type="entry name" value="MetI-like_sf"/>
</dbReference>
<dbReference type="NCBIfam" id="NF008210">
    <property type="entry name" value="PRK10973.1"/>
    <property type="match status" value="1"/>
</dbReference>
<dbReference type="PANTHER" id="PTHR43744">
    <property type="entry name" value="ABC TRANSPORTER PERMEASE PROTEIN MG189-RELATED-RELATED"/>
    <property type="match status" value="1"/>
</dbReference>
<dbReference type="PANTHER" id="PTHR43744:SF8">
    <property type="entry name" value="SN-GLYCEROL-3-PHOSPHATE TRANSPORT SYSTEM PERMEASE PROTEIN UGPE"/>
    <property type="match status" value="1"/>
</dbReference>
<dbReference type="Pfam" id="PF00528">
    <property type="entry name" value="BPD_transp_1"/>
    <property type="match status" value="1"/>
</dbReference>
<dbReference type="SUPFAM" id="SSF161098">
    <property type="entry name" value="MetI-like"/>
    <property type="match status" value="1"/>
</dbReference>
<dbReference type="PROSITE" id="PS50928">
    <property type="entry name" value="ABC_TM1"/>
    <property type="match status" value="1"/>
</dbReference>
<evidence type="ECO:0000250" key="1">
    <source>
        <dbReference type="UniProtKB" id="P10906"/>
    </source>
</evidence>
<evidence type="ECO:0000255" key="2"/>
<evidence type="ECO:0000255" key="3">
    <source>
        <dbReference type="PROSITE-ProRule" id="PRU00441"/>
    </source>
</evidence>
<evidence type="ECO:0000305" key="4"/>
<name>UGPE_BRUME</name>
<proteinExistence type="inferred from homology"/>
<protein>
    <recommendedName>
        <fullName evidence="1">sn-glycerol-3-phosphate transport system permease protein UgpE</fullName>
    </recommendedName>
</protein>
<keyword id="KW-0997">Cell inner membrane</keyword>
<keyword id="KW-1003">Cell membrane</keyword>
<keyword id="KW-0472">Membrane</keyword>
<keyword id="KW-0812">Transmembrane</keyword>
<keyword id="KW-1133">Transmembrane helix</keyword>
<keyword id="KW-0813">Transport</keyword>
<sequence length="282" mass="32036">MIEQRPVSNLIGHLILILGIIIVAFPIYYTFVASSMTSTQIIRPPISLLPGDHLVENYREAIFGGVERVVGVSLERLLWNSFVVAMAIAVGKIIISFMSAFAIVFFRFPMRMFFFWMIFITLMLPVEVRILPTYKVIVDLGMIDTYAGLTLPLMASATATFLFRQFFLTIPGELVEAARIDNAGPFRFMRDILLPLSKTNIAALFVILFIYGWTQYLWPLLVTNDAKMNTIIIGLRRMVDWADASTPWNYVMVTAILAIIPPILVVVLMQRWFVKGLVETEK</sequence>
<feature type="chain" id="PRO_0000290139" description="sn-glycerol-3-phosphate transport system permease protein UgpE">
    <location>
        <begin position="1"/>
        <end position="282"/>
    </location>
</feature>
<feature type="transmembrane region" description="Helical" evidence="3">
    <location>
        <begin position="14"/>
        <end position="34"/>
    </location>
</feature>
<feature type="transmembrane region" description="Helical" evidence="3">
    <location>
        <begin position="86"/>
        <end position="106"/>
    </location>
</feature>
<feature type="transmembrane region" description="Helical" evidence="3">
    <location>
        <begin position="112"/>
        <end position="132"/>
    </location>
</feature>
<feature type="transmembrane region" description="Helical" evidence="3">
    <location>
        <begin position="146"/>
        <end position="168"/>
    </location>
</feature>
<feature type="transmembrane region" description="Helical" evidence="3">
    <location>
        <begin position="201"/>
        <end position="221"/>
    </location>
</feature>
<feature type="transmembrane region" description="Helical" evidence="3">
    <location>
        <begin position="248"/>
        <end position="268"/>
    </location>
</feature>
<feature type="domain" description="ABC transmembrane type-1" evidence="3">
    <location>
        <begin position="78"/>
        <end position="269"/>
    </location>
</feature>
<organism>
    <name type="scientific">Brucella melitensis biotype 1 (strain ATCC 23456 / CCUG 17765 / NCTC 10094 / 16M)</name>
    <dbReference type="NCBI Taxonomy" id="224914"/>
    <lineage>
        <taxon>Bacteria</taxon>
        <taxon>Pseudomonadati</taxon>
        <taxon>Pseudomonadota</taxon>
        <taxon>Alphaproteobacteria</taxon>
        <taxon>Hyphomicrobiales</taxon>
        <taxon>Brucellaceae</taxon>
        <taxon>Brucella/Ochrobactrum group</taxon>
        <taxon>Brucella</taxon>
    </lineage>
</organism>
<comment type="function">
    <text evidence="1">Part of the ABC transporter complex UgpBAEC involved in sn-glycerol-3-phosphate (G3P) import. Probably responsible for the translocation of the substrate across the membrane.</text>
</comment>
<comment type="subunit">
    <text evidence="1">The complex is composed of two ATP-binding proteins (UgpC), two transmembrane proteins (UgpA and UgpE) and a solute-binding protein (UgpB).</text>
</comment>
<comment type="subcellular location">
    <subcellularLocation>
        <location evidence="1">Cell inner membrane</location>
        <topology evidence="2">Multi-pass membrane protein</topology>
    </subcellularLocation>
</comment>
<comment type="similarity">
    <text evidence="4">Belongs to the binding-protein-dependent transport system permease family.</text>
</comment>
<comment type="sequence caution" evidence="4">
    <conflict type="frameshift">
        <sequence resource="EMBL-CDS" id="AAL53864"/>
    </conflict>
</comment>
<gene>
    <name type="primary">ugpE</name>
    <name type="ordered locus">BMEII0622</name>
</gene>
<reference key="1">
    <citation type="journal article" date="2002" name="Proc. Natl. Acad. Sci. U.S.A.">
        <title>The genome sequence of the facultative intracellular pathogen Brucella melitensis.</title>
        <authorList>
            <person name="DelVecchio V.G."/>
            <person name="Kapatral V."/>
            <person name="Redkar R.J."/>
            <person name="Patra G."/>
            <person name="Mujer C."/>
            <person name="Los T."/>
            <person name="Ivanova N."/>
            <person name="Anderson I."/>
            <person name="Bhattacharyya A."/>
            <person name="Lykidis A."/>
            <person name="Reznik G."/>
            <person name="Jablonski L."/>
            <person name="Larsen N."/>
            <person name="D'Souza M."/>
            <person name="Bernal A."/>
            <person name="Mazur M."/>
            <person name="Goltsman E."/>
            <person name="Selkov E."/>
            <person name="Elzer P.H."/>
            <person name="Hagius S."/>
            <person name="O'Callaghan D."/>
            <person name="Letesson J.-J."/>
            <person name="Haselkorn R."/>
            <person name="Kyrpides N.C."/>
            <person name="Overbeek R."/>
        </authorList>
    </citation>
    <scope>NUCLEOTIDE SEQUENCE [LARGE SCALE GENOMIC DNA]</scope>
    <source>
        <strain>ATCC 23456 / CCUG 17765 / NCTC 10094 / 16M</strain>
    </source>
</reference>
<accession>Q8YCB0</accession>